<proteinExistence type="inferred from homology"/>
<name>HLDE_METCA</name>
<accession>Q607M3</accession>
<feature type="chain" id="PRO_0000255767" description="Bifunctional protein HldE">
    <location>
        <begin position="1"/>
        <end position="473"/>
    </location>
</feature>
<feature type="region of interest" description="Ribokinase">
    <location>
        <begin position="1"/>
        <end position="316"/>
    </location>
</feature>
<feature type="region of interest" description="Cytidylyltransferase">
    <location>
        <begin position="342"/>
        <end position="473"/>
    </location>
</feature>
<feature type="active site" evidence="1">
    <location>
        <position position="262"/>
    </location>
</feature>
<feature type="binding site" evidence="1">
    <location>
        <begin position="193"/>
        <end position="196"/>
    </location>
    <ligand>
        <name>ATP</name>
        <dbReference type="ChEBI" id="CHEBI:30616"/>
    </ligand>
</feature>
<evidence type="ECO:0000255" key="1">
    <source>
        <dbReference type="HAMAP-Rule" id="MF_01603"/>
    </source>
</evidence>
<reference key="1">
    <citation type="journal article" date="2004" name="PLoS Biol.">
        <title>Genomic insights into methanotrophy: the complete genome sequence of Methylococcus capsulatus (Bath).</title>
        <authorList>
            <person name="Ward N.L."/>
            <person name="Larsen O."/>
            <person name="Sakwa J."/>
            <person name="Bruseth L."/>
            <person name="Khouri H.M."/>
            <person name="Durkin A.S."/>
            <person name="Dimitrov G."/>
            <person name="Jiang L."/>
            <person name="Scanlan D."/>
            <person name="Kang K.H."/>
            <person name="Lewis M.R."/>
            <person name="Nelson K.E."/>
            <person name="Methe B.A."/>
            <person name="Wu M."/>
            <person name="Heidelberg J.F."/>
            <person name="Paulsen I.T."/>
            <person name="Fouts D.E."/>
            <person name="Ravel J."/>
            <person name="Tettelin H."/>
            <person name="Ren Q."/>
            <person name="Read T.D."/>
            <person name="DeBoy R.T."/>
            <person name="Seshadri R."/>
            <person name="Salzberg S.L."/>
            <person name="Jensen H.B."/>
            <person name="Birkeland N.K."/>
            <person name="Nelson W.C."/>
            <person name="Dodson R.J."/>
            <person name="Grindhaug S.H."/>
            <person name="Holt I.E."/>
            <person name="Eidhammer I."/>
            <person name="Jonasen I."/>
            <person name="Vanaken S."/>
            <person name="Utterback T.R."/>
            <person name="Feldblyum T.V."/>
            <person name="Fraser C.M."/>
            <person name="Lillehaug J.R."/>
            <person name="Eisen J.A."/>
        </authorList>
    </citation>
    <scope>NUCLEOTIDE SEQUENCE [LARGE SCALE GENOMIC DNA]</scope>
    <source>
        <strain>ATCC 33009 / NCIMB 11132 / Bath</strain>
    </source>
</reference>
<organism>
    <name type="scientific">Methylococcus capsulatus (strain ATCC 33009 / NCIMB 11132 / Bath)</name>
    <dbReference type="NCBI Taxonomy" id="243233"/>
    <lineage>
        <taxon>Bacteria</taxon>
        <taxon>Pseudomonadati</taxon>
        <taxon>Pseudomonadota</taxon>
        <taxon>Gammaproteobacteria</taxon>
        <taxon>Methylococcales</taxon>
        <taxon>Methylococcaceae</taxon>
        <taxon>Methylococcus</taxon>
    </lineage>
</organism>
<comment type="function">
    <text evidence="1">Catalyzes the phosphorylation of D-glycero-D-manno-heptose 7-phosphate at the C-1 position to selectively form D-glycero-beta-D-manno-heptose-1,7-bisphosphate.</text>
</comment>
<comment type="function">
    <text evidence="1">Catalyzes the ADP transfer from ATP to D-glycero-beta-D-manno-heptose 1-phosphate, yielding ADP-D-glycero-beta-D-manno-heptose.</text>
</comment>
<comment type="catalytic activity">
    <reaction evidence="1">
        <text>D-glycero-beta-D-manno-heptose 7-phosphate + ATP = D-glycero-beta-D-manno-heptose 1,7-bisphosphate + ADP + H(+)</text>
        <dbReference type="Rhea" id="RHEA:27473"/>
        <dbReference type="ChEBI" id="CHEBI:15378"/>
        <dbReference type="ChEBI" id="CHEBI:30616"/>
        <dbReference type="ChEBI" id="CHEBI:60204"/>
        <dbReference type="ChEBI" id="CHEBI:60208"/>
        <dbReference type="ChEBI" id="CHEBI:456216"/>
        <dbReference type="EC" id="2.7.1.167"/>
    </reaction>
</comment>
<comment type="catalytic activity">
    <reaction evidence="1">
        <text>D-glycero-beta-D-manno-heptose 1-phosphate + ATP + H(+) = ADP-D-glycero-beta-D-manno-heptose + diphosphate</text>
        <dbReference type="Rhea" id="RHEA:27465"/>
        <dbReference type="ChEBI" id="CHEBI:15378"/>
        <dbReference type="ChEBI" id="CHEBI:30616"/>
        <dbReference type="ChEBI" id="CHEBI:33019"/>
        <dbReference type="ChEBI" id="CHEBI:59967"/>
        <dbReference type="ChEBI" id="CHEBI:61593"/>
        <dbReference type="EC" id="2.7.7.70"/>
    </reaction>
</comment>
<comment type="pathway">
    <text evidence="1">Nucleotide-sugar biosynthesis; ADP-L-glycero-beta-D-manno-heptose biosynthesis; ADP-L-glycero-beta-D-manno-heptose from D-glycero-beta-D-manno-heptose 7-phosphate: step 1/4.</text>
</comment>
<comment type="pathway">
    <text evidence="1">Nucleotide-sugar biosynthesis; ADP-L-glycero-beta-D-manno-heptose biosynthesis; ADP-L-glycero-beta-D-manno-heptose from D-glycero-beta-D-manno-heptose 7-phosphate: step 3/4.</text>
</comment>
<comment type="subunit">
    <text evidence="1">Homodimer.</text>
</comment>
<comment type="similarity">
    <text evidence="1">In the N-terminal section; belongs to the carbohydrate kinase PfkB family.</text>
</comment>
<comment type="similarity">
    <text evidence="1">In the C-terminal section; belongs to the cytidylyltransferase family.</text>
</comment>
<sequence length="473" mass="50373">MILPDFSLARVLVVGDLMLDRYWFGGASRISPEAPVPVVRVESSEERIGGAGNVALNLAALGGEVDLLGYAGEDEAAAALERLLAVAGIRSHIERCPAVATITKLRVVSRQQQLIRLDFEDGFAHLDPAPLVTRFRALLEETGVVVLSDYAKGTLACVEEFIAASRRAGKPVLVDPKGVDFDRYRGATLLTPNLSEFEAVVGACCDDAEIERKGRALMTRLDLEALLVTRGEHGMSLLRPTAGALHLPAHGKEVYDVTGAGDTVISVLAAALAVGRPLTDAVALANLAAGIVVGKLGTASVSPEELAIAIHGQRAPRRGAITLAELLDVLIPLRRAGERIVVTNGCFDLLHPGHVHYLEQARALGDRLIVLVNGDDSVRRLKGAGRPVNPLPHRMAMLAALESVDWVVAFDGDTPRDEICAIRPHVLVKGGDYADITAIVGHDCVLETGGEVRILDFVEGHSTTRIIEAIRNG</sequence>
<gene>
    <name evidence="1" type="primary">hldE</name>
    <name type="ordered locus">MCA1736</name>
</gene>
<keyword id="KW-0067">ATP-binding</keyword>
<keyword id="KW-0119">Carbohydrate metabolism</keyword>
<keyword id="KW-0418">Kinase</keyword>
<keyword id="KW-0511">Multifunctional enzyme</keyword>
<keyword id="KW-0547">Nucleotide-binding</keyword>
<keyword id="KW-0548">Nucleotidyltransferase</keyword>
<keyword id="KW-1185">Reference proteome</keyword>
<keyword id="KW-0808">Transferase</keyword>
<protein>
    <recommendedName>
        <fullName evidence="1">Bifunctional protein HldE</fullName>
    </recommendedName>
    <domain>
        <recommendedName>
            <fullName evidence="1">D-beta-D-heptose 7-phosphate kinase</fullName>
            <ecNumber evidence="1">2.7.1.167</ecNumber>
        </recommendedName>
        <alternativeName>
            <fullName evidence="1">D-beta-D-heptose 7-phosphotransferase</fullName>
        </alternativeName>
        <alternativeName>
            <fullName evidence="1">D-glycero-beta-D-manno-heptose-7-phosphate kinase</fullName>
        </alternativeName>
    </domain>
    <domain>
        <recommendedName>
            <fullName evidence="1">D-beta-D-heptose 1-phosphate adenylyltransferase</fullName>
            <ecNumber evidence="1">2.7.7.70</ecNumber>
        </recommendedName>
        <alternativeName>
            <fullName evidence="1">D-glycero-beta-D-manno-heptose 1-phosphate adenylyltransferase</fullName>
        </alternativeName>
    </domain>
</protein>
<dbReference type="EC" id="2.7.1.167" evidence="1"/>
<dbReference type="EC" id="2.7.7.70" evidence="1"/>
<dbReference type="EMBL" id="AE017282">
    <property type="protein sequence ID" value="AAU91980.1"/>
    <property type="molecule type" value="Genomic_DNA"/>
</dbReference>
<dbReference type="RefSeq" id="WP_010960990.1">
    <property type="nucleotide sequence ID" value="NC_002977.6"/>
</dbReference>
<dbReference type="SMR" id="Q607M3"/>
<dbReference type="STRING" id="243233.MCA1736"/>
<dbReference type="GeneID" id="88223989"/>
<dbReference type="KEGG" id="mca:MCA1736"/>
<dbReference type="eggNOG" id="COG0615">
    <property type="taxonomic scope" value="Bacteria"/>
</dbReference>
<dbReference type="eggNOG" id="COG2870">
    <property type="taxonomic scope" value="Bacteria"/>
</dbReference>
<dbReference type="HOGENOM" id="CLU_021150_2_1_6"/>
<dbReference type="UniPathway" id="UPA00356">
    <property type="reaction ID" value="UER00437"/>
</dbReference>
<dbReference type="UniPathway" id="UPA00356">
    <property type="reaction ID" value="UER00439"/>
</dbReference>
<dbReference type="Proteomes" id="UP000006821">
    <property type="component" value="Chromosome"/>
</dbReference>
<dbReference type="GO" id="GO:0005829">
    <property type="term" value="C:cytosol"/>
    <property type="evidence" value="ECO:0007669"/>
    <property type="project" value="TreeGrafter"/>
</dbReference>
<dbReference type="GO" id="GO:0005524">
    <property type="term" value="F:ATP binding"/>
    <property type="evidence" value="ECO:0007669"/>
    <property type="project" value="UniProtKB-UniRule"/>
</dbReference>
<dbReference type="GO" id="GO:0033785">
    <property type="term" value="F:heptose 7-phosphate kinase activity"/>
    <property type="evidence" value="ECO:0007669"/>
    <property type="project" value="UniProtKB-UniRule"/>
</dbReference>
<dbReference type="GO" id="GO:0033786">
    <property type="term" value="F:heptose-1-phosphate adenylyltransferase activity"/>
    <property type="evidence" value="ECO:0007669"/>
    <property type="project" value="UniProtKB-UniRule"/>
</dbReference>
<dbReference type="GO" id="GO:0016773">
    <property type="term" value="F:phosphotransferase activity, alcohol group as acceptor"/>
    <property type="evidence" value="ECO:0007669"/>
    <property type="project" value="InterPro"/>
</dbReference>
<dbReference type="GO" id="GO:0097171">
    <property type="term" value="P:ADP-L-glycero-beta-D-manno-heptose biosynthetic process"/>
    <property type="evidence" value="ECO:0007669"/>
    <property type="project" value="UniProtKB-UniPathway"/>
</dbReference>
<dbReference type="CDD" id="cd01172">
    <property type="entry name" value="RfaE_like"/>
    <property type="match status" value="1"/>
</dbReference>
<dbReference type="FunFam" id="3.40.1190.20:FF:000002">
    <property type="entry name" value="Bifunctional protein HldE"/>
    <property type="match status" value="1"/>
</dbReference>
<dbReference type="Gene3D" id="3.40.1190.20">
    <property type="match status" value="1"/>
</dbReference>
<dbReference type="Gene3D" id="3.40.50.620">
    <property type="entry name" value="HUPs"/>
    <property type="match status" value="1"/>
</dbReference>
<dbReference type="HAMAP" id="MF_01603">
    <property type="entry name" value="HldE"/>
    <property type="match status" value="1"/>
</dbReference>
<dbReference type="InterPro" id="IPR023030">
    <property type="entry name" value="Bifunc_HldE"/>
</dbReference>
<dbReference type="InterPro" id="IPR002173">
    <property type="entry name" value="Carboh/pur_kinase_PfkB_CS"/>
</dbReference>
<dbReference type="InterPro" id="IPR004821">
    <property type="entry name" value="Cyt_trans-like"/>
</dbReference>
<dbReference type="InterPro" id="IPR011611">
    <property type="entry name" value="PfkB_dom"/>
</dbReference>
<dbReference type="InterPro" id="IPR011913">
    <property type="entry name" value="RfaE_dom_I"/>
</dbReference>
<dbReference type="InterPro" id="IPR011914">
    <property type="entry name" value="RfaE_dom_II"/>
</dbReference>
<dbReference type="InterPro" id="IPR029056">
    <property type="entry name" value="Ribokinase-like"/>
</dbReference>
<dbReference type="InterPro" id="IPR014729">
    <property type="entry name" value="Rossmann-like_a/b/a_fold"/>
</dbReference>
<dbReference type="NCBIfam" id="TIGR00125">
    <property type="entry name" value="cyt_tran_rel"/>
    <property type="match status" value="1"/>
</dbReference>
<dbReference type="NCBIfam" id="NF008454">
    <property type="entry name" value="PRK11316.1"/>
    <property type="match status" value="1"/>
</dbReference>
<dbReference type="NCBIfam" id="TIGR02198">
    <property type="entry name" value="rfaE_dom_I"/>
    <property type="match status" value="1"/>
</dbReference>
<dbReference type="NCBIfam" id="TIGR02199">
    <property type="entry name" value="rfaE_dom_II"/>
    <property type="match status" value="1"/>
</dbReference>
<dbReference type="PANTHER" id="PTHR46969">
    <property type="entry name" value="BIFUNCTIONAL PROTEIN HLDE"/>
    <property type="match status" value="1"/>
</dbReference>
<dbReference type="PANTHER" id="PTHR46969:SF1">
    <property type="entry name" value="BIFUNCTIONAL PROTEIN HLDE"/>
    <property type="match status" value="1"/>
</dbReference>
<dbReference type="Pfam" id="PF01467">
    <property type="entry name" value="CTP_transf_like"/>
    <property type="match status" value="1"/>
</dbReference>
<dbReference type="Pfam" id="PF00294">
    <property type="entry name" value="PfkB"/>
    <property type="match status" value="1"/>
</dbReference>
<dbReference type="SUPFAM" id="SSF52374">
    <property type="entry name" value="Nucleotidylyl transferase"/>
    <property type="match status" value="1"/>
</dbReference>
<dbReference type="SUPFAM" id="SSF53613">
    <property type="entry name" value="Ribokinase-like"/>
    <property type="match status" value="1"/>
</dbReference>
<dbReference type="PROSITE" id="PS00583">
    <property type="entry name" value="PFKB_KINASES_1"/>
    <property type="match status" value="1"/>
</dbReference>